<protein>
    <recommendedName>
        <fullName evidence="1">Probable S-methyl-5'-thioinosine phosphorylase</fullName>
        <ecNumber evidence="1">2.4.2.44</ecNumber>
    </recommendedName>
    <alternativeName>
        <fullName evidence="1">5'-methylthioinosine phosphorylase</fullName>
        <shortName evidence="1">MTI phosphorylase</shortName>
        <shortName evidence="1">MTIP</shortName>
    </alternativeName>
</protein>
<comment type="function">
    <text evidence="1">Catalyzes the reversible phosphorylation of S-methyl-5'-thioinosine (MTI) to hypoxanthine and 5-methylthioribose-1-phosphate. Involved in the breakdown of S-methyl-5'-thioadenosine (MTA), a major by-product of polyamine biosynthesis. Catabolism of (MTA) occurs via deamination to MTI and phosphorolysis to hypoxanthine.</text>
</comment>
<comment type="catalytic activity">
    <reaction evidence="1">
        <text>S-methyl-5'-thioinosine + phosphate = 5-(methylsulfanyl)-alpha-D-ribose 1-phosphate + hypoxanthine</text>
        <dbReference type="Rhea" id="RHEA:30643"/>
        <dbReference type="ChEBI" id="CHEBI:17368"/>
        <dbReference type="ChEBI" id="CHEBI:43474"/>
        <dbReference type="ChEBI" id="CHEBI:48595"/>
        <dbReference type="ChEBI" id="CHEBI:58533"/>
        <dbReference type="EC" id="2.4.2.44"/>
    </reaction>
</comment>
<comment type="pathway">
    <text evidence="1">Purine metabolism; purine nucleoside salvage.</text>
</comment>
<comment type="subunit">
    <text evidence="1">Homotrimer.</text>
</comment>
<comment type="miscellaneous">
    <text evidence="1">Although this enzyme belongs to the family of MTA phosphorylases based on sequence homology, it has been shown that conserved amino acid substitutions in the substrate binding pocket convert the substrate specificity of this enzyme from 6-aminopurines to 6-oxopurines.</text>
</comment>
<comment type="similarity">
    <text evidence="1">Belongs to the PNP/MTAP phosphorylase family. MTAP subfamily.</text>
</comment>
<evidence type="ECO:0000255" key="1">
    <source>
        <dbReference type="HAMAP-Rule" id="MF_01963"/>
    </source>
</evidence>
<keyword id="KW-0328">Glycosyltransferase</keyword>
<keyword id="KW-0660">Purine salvage</keyword>
<keyword id="KW-1185">Reference proteome</keyword>
<keyword id="KW-0808">Transferase</keyword>
<dbReference type="EC" id="2.4.2.44" evidence="1"/>
<dbReference type="EMBL" id="CP001147">
    <property type="protein sequence ID" value="ACI21697.1"/>
    <property type="molecule type" value="Genomic_DNA"/>
</dbReference>
<dbReference type="RefSeq" id="WP_012546405.1">
    <property type="nucleotide sequence ID" value="NC_011296.1"/>
</dbReference>
<dbReference type="RefSeq" id="YP_002248810.1">
    <property type="nucleotide sequence ID" value="NC_011296.1"/>
</dbReference>
<dbReference type="SMR" id="B5YKP5"/>
<dbReference type="FunCoup" id="B5YKP5">
    <property type="interactions" value="380"/>
</dbReference>
<dbReference type="STRING" id="289376.THEYE_A0977"/>
<dbReference type="EnsemblBacteria" id="ACI21697">
    <property type="protein sequence ID" value="ACI21697"/>
    <property type="gene ID" value="THEYE_A0977"/>
</dbReference>
<dbReference type="KEGG" id="tye:THEYE_A0977"/>
<dbReference type="PATRIC" id="fig|289376.4.peg.962"/>
<dbReference type="eggNOG" id="COG0005">
    <property type="taxonomic scope" value="Bacteria"/>
</dbReference>
<dbReference type="HOGENOM" id="CLU_054456_0_2_0"/>
<dbReference type="InParanoid" id="B5YKP5"/>
<dbReference type="OrthoDB" id="1523230at2"/>
<dbReference type="UniPathway" id="UPA00606"/>
<dbReference type="Proteomes" id="UP000000718">
    <property type="component" value="Chromosome"/>
</dbReference>
<dbReference type="GO" id="GO:0005829">
    <property type="term" value="C:cytosol"/>
    <property type="evidence" value="ECO:0000318"/>
    <property type="project" value="GO_Central"/>
</dbReference>
<dbReference type="GO" id="GO:0017061">
    <property type="term" value="F:S-methyl-5-thioadenosine phosphorylase activity"/>
    <property type="evidence" value="ECO:0000318"/>
    <property type="project" value="GO_Central"/>
</dbReference>
<dbReference type="GO" id="GO:0019509">
    <property type="term" value="P:L-methionine salvage from methylthioadenosine"/>
    <property type="evidence" value="ECO:0000318"/>
    <property type="project" value="GO_Central"/>
</dbReference>
<dbReference type="GO" id="GO:0006166">
    <property type="term" value="P:purine ribonucleoside salvage"/>
    <property type="evidence" value="ECO:0007669"/>
    <property type="project" value="UniProtKB-UniRule"/>
</dbReference>
<dbReference type="CDD" id="cd09010">
    <property type="entry name" value="MTAP_SsMTAPII_like_MTIP"/>
    <property type="match status" value="1"/>
</dbReference>
<dbReference type="FunFam" id="3.40.50.1580:FF:000012">
    <property type="entry name" value="Probable 6-oxopurine nucleoside phosphorylase"/>
    <property type="match status" value="1"/>
</dbReference>
<dbReference type="Gene3D" id="3.40.50.1580">
    <property type="entry name" value="Nucleoside phosphorylase domain"/>
    <property type="match status" value="1"/>
</dbReference>
<dbReference type="HAMAP" id="MF_01963">
    <property type="entry name" value="MTAP"/>
    <property type="match status" value="1"/>
</dbReference>
<dbReference type="InterPro" id="IPR010044">
    <property type="entry name" value="MTAP"/>
</dbReference>
<dbReference type="InterPro" id="IPR000845">
    <property type="entry name" value="Nucleoside_phosphorylase_d"/>
</dbReference>
<dbReference type="InterPro" id="IPR035994">
    <property type="entry name" value="Nucleoside_phosphorylase_sf"/>
</dbReference>
<dbReference type="NCBIfam" id="TIGR01694">
    <property type="entry name" value="MTAP"/>
    <property type="match status" value="1"/>
</dbReference>
<dbReference type="NCBIfam" id="NF006599">
    <property type="entry name" value="PRK09136.1"/>
    <property type="match status" value="1"/>
</dbReference>
<dbReference type="PANTHER" id="PTHR42679">
    <property type="entry name" value="S-METHYL-5'-THIOADENOSINE PHOSPHORYLASE"/>
    <property type="match status" value="1"/>
</dbReference>
<dbReference type="PANTHER" id="PTHR42679:SF2">
    <property type="entry name" value="S-METHYL-5'-THIOADENOSINE PHOSPHORYLASE"/>
    <property type="match status" value="1"/>
</dbReference>
<dbReference type="Pfam" id="PF01048">
    <property type="entry name" value="PNP_UDP_1"/>
    <property type="match status" value="1"/>
</dbReference>
<dbReference type="SUPFAM" id="SSF53167">
    <property type="entry name" value="Purine and uridine phosphorylases"/>
    <property type="match status" value="1"/>
</dbReference>
<name>MTIP_THEYD</name>
<organism>
    <name type="scientific">Thermodesulfovibrio yellowstonii (strain ATCC 51303 / DSM 11347 / YP87)</name>
    <dbReference type="NCBI Taxonomy" id="289376"/>
    <lineage>
        <taxon>Bacteria</taxon>
        <taxon>Pseudomonadati</taxon>
        <taxon>Nitrospirota</taxon>
        <taxon>Thermodesulfovibrionia</taxon>
        <taxon>Thermodesulfovibrionales</taxon>
        <taxon>Thermodesulfovibrionaceae</taxon>
        <taxon>Thermodesulfovibrio</taxon>
    </lineage>
</organism>
<feature type="chain" id="PRO_0000415139" description="Probable S-methyl-5'-thioinosine phosphorylase">
    <location>
        <begin position="1"/>
        <end position="265"/>
    </location>
</feature>
<feature type="binding site" evidence="1">
    <location>
        <position position="15"/>
    </location>
    <ligand>
        <name>phosphate</name>
        <dbReference type="ChEBI" id="CHEBI:43474"/>
    </ligand>
</feature>
<feature type="binding site" evidence="1">
    <location>
        <begin position="55"/>
        <end position="56"/>
    </location>
    <ligand>
        <name>phosphate</name>
        <dbReference type="ChEBI" id="CHEBI:43474"/>
    </ligand>
</feature>
<feature type="binding site" evidence="1">
    <location>
        <position position="187"/>
    </location>
    <ligand>
        <name>substrate</name>
    </ligand>
</feature>
<feature type="binding site" evidence="1">
    <location>
        <position position="188"/>
    </location>
    <ligand>
        <name>phosphate</name>
        <dbReference type="ChEBI" id="CHEBI:43474"/>
    </ligand>
</feature>
<feature type="binding site" evidence="1">
    <location>
        <begin position="211"/>
        <end position="213"/>
    </location>
    <ligand>
        <name>substrate</name>
    </ligand>
</feature>
<feature type="site" description="Important for substrate specificity" evidence="1">
    <location>
        <position position="169"/>
    </location>
</feature>
<feature type="site" description="Important for substrate specificity" evidence="1">
    <location>
        <position position="223"/>
    </location>
</feature>
<gene>
    <name type="ordered locus">THEYE_A0977</name>
</gene>
<sequence>MHNKQQVKIGIIGGSGLSESEAKKEIITIKTPYGEPSCPYEIEKIDDIEVLFLRRHGQKHSIPPHKVNYRANIYGFKNFGIERIFGVFATGSLTENIPPGSIVIPNQIIDFTQGMRANTFYEEKKVVHIDFTEPFCSEIRHYLLETARKIGINVISHATYICVNGPRLETAAEIKFFKNIGADIIGMTIMPEASLAREVEICYAAVAVVANYAAGISKFPLTVKEVIETMEDSLDAVGFLIKETIKKLPEERKCLCKHALKNASF</sequence>
<proteinExistence type="inferred from homology"/>
<reference key="1">
    <citation type="submission" date="2008-08" db="EMBL/GenBank/DDBJ databases">
        <title>The complete genome sequence of Thermodesulfovibrio yellowstonii strain ATCC 51303 / DSM 11347 / YP87.</title>
        <authorList>
            <person name="Dodson R.J."/>
            <person name="Durkin A.S."/>
            <person name="Wu M."/>
            <person name="Eisen J."/>
            <person name="Sutton G."/>
        </authorList>
    </citation>
    <scope>NUCLEOTIDE SEQUENCE [LARGE SCALE GENOMIC DNA]</scope>
    <source>
        <strain>ATCC 51303 / DSM 11347 / YP87</strain>
    </source>
</reference>
<accession>B5YKP5</accession>